<feature type="chain" id="PRO_1000080089" description="Large ribosomal subunit protein bL20">
    <location>
        <begin position="1"/>
        <end position="117"/>
    </location>
</feature>
<sequence>MARVKRGVMVRKRHKKLLEQAKGYRGSRSRRVKVARETVMKALWYAYRDRRNRKRDFRRLWIIRINAAARMHGMSYSRLMNGLKRAGIELDRKVLADMAVRDPAAFGRVVEQAQQVV</sequence>
<proteinExistence type="inferred from homology"/>
<gene>
    <name evidence="1" type="primary">rplT</name>
    <name type="ordered locus">Rcas_1436</name>
</gene>
<protein>
    <recommendedName>
        <fullName evidence="1">Large ribosomal subunit protein bL20</fullName>
    </recommendedName>
    <alternativeName>
        <fullName evidence="2">50S ribosomal protein L20</fullName>
    </alternativeName>
</protein>
<organism>
    <name type="scientific">Roseiflexus castenholzii (strain DSM 13941 / HLO8)</name>
    <dbReference type="NCBI Taxonomy" id="383372"/>
    <lineage>
        <taxon>Bacteria</taxon>
        <taxon>Bacillati</taxon>
        <taxon>Chloroflexota</taxon>
        <taxon>Chloroflexia</taxon>
        <taxon>Chloroflexales</taxon>
        <taxon>Roseiflexineae</taxon>
        <taxon>Roseiflexaceae</taxon>
        <taxon>Roseiflexus</taxon>
    </lineage>
</organism>
<keyword id="KW-1185">Reference proteome</keyword>
<keyword id="KW-0687">Ribonucleoprotein</keyword>
<keyword id="KW-0689">Ribosomal protein</keyword>
<keyword id="KW-0694">RNA-binding</keyword>
<keyword id="KW-0699">rRNA-binding</keyword>
<dbReference type="EMBL" id="CP000804">
    <property type="protein sequence ID" value="ABU57531.1"/>
    <property type="molecule type" value="Genomic_DNA"/>
</dbReference>
<dbReference type="RefSeq" id="WP_012119959.1">
    <property type="nucleotide sequence ID" value="NC_009767.1"/>
</dbReference>
<dbReference type="SMR" id="A7NJ65"/>
<dbReference type="STRING" id="383372.Rcas_1436"/>
<dbReference type="KEGG" id="rca:Rcas_1436"/>
<dbReference type="eggNOG" id="COG0292">
    <property type="taxonomic scope" value="Bacteria"/>
</dbReference>
<dbReference type="HOGENOM" id="CLU_123265_0_1_0"/>
<dbReference type="OrthoDB" id="9808966at2"/>
<dbReference type="Proteomes" id="UP000000263">
    <property type="component" value="Chromosome"/>
</dbReference>
<dbReference type="GO" id="GO:1990904">
    <property type="term" value="C:ribonucleoprotein complex"/>
    <property type="evidence" value="ECO:0007669"/>
    <property type="project" value="UniProtKB-KW"/>
</dbReference>
<dbReference type="GO" id="GO:0005840">
    <property type="term" value="C:ribosome"/>
    <property type="evidence" value="ECO:0007669"/>
    <property type="project" value="UniProtKB-KW"/>
</dbReference>
<dbReference type="GO" id="GO:0019843">
    <property type="term" value="F:rRNA binding"/>
    <property type="evidence" value="ECO:0007669"/>
    <property type="project" value="UniProtKB-UniRule"/>
</dbReference>
<dbReference type="GO" id="GO:0003735">
    <property type="term" value="F:structural constituent of ribosome"/>
    <property type="evidence" value="ECO:0007669"/>
    <property type="project" value="InterPro"/>
</dbReference>
<dbReference type="GO" id="GO:0000027">
    <property type="term" value="P:ribosomal large subunit assembly"/>
    <property type="evidence" value="ECO:0007669"/>
    <property type="project" value="UniProtKB-UniRule"/>
</dbReference>
<dbReference type="GO" id="GO:0006412">
    <property type="term" value="P:translation"/>
    <property type="evidence" value="ECO:0007669"/>
    <property type="project" value="InterPro"/>
</dbReference>
<dbReference type="CDD" id="cd07026">
    <property type="entry name" value="Ribosomal_L20"/>
    <property type="match status" value="1"/>
</dbReference>
<dbReference type="FunFam" id="1.10.1900.20:FF:000001">
    <property type="entry name" value="50S ribosomal protein L20"/>
    <property type="match status" value="1"/>
</dbReference>
<dbReference type="Gene3D" id="6.10.160.10">
    <property type="match status" value="1"/>
</dbReference>
<dbReference type="Gene3D" id="1.10.1900.20">
    <property type="entry name" value="Ribosomal protein L20"/>
    <property type="match status" value="1"/>
</dbReference>
<dbReference type="HAMAP" id="MF_00382">
    <property type="entry name" value="Ribosomal_bL20"/>
    <property type="match status" value="1"/>
</dbReference>
<dbReference type="InterPro" id="IPR005813">
    <property type="entry name" value="Ribosomal_bL20"/>
</dbReference>
<dbReference type="InterPro" id="IPR049946">
    <property type="entry name" value="RIBOSOMAL_L20_CS"/>
</dbReference>
<dbReference type="InterPro" id="IPR035566">
    <property type="entry name" value="Ribosomal_protein_bL20_C"/>
</dbReference>
<dbReference type="NCBIfam" id="TIGR01032">
    <property type="entry name" value="rplT_bact"/>
    <property type="match status" value="1"/>
</dbReference>
<dbReference type="PANTHER" id="PTHR10986">
    <property type="entry name" value="39S RIBOSOMAL PROTEIN L20"/>
    <property type="match status" value="1"/>
</dbReference>
<dbReference type="Pfam" id="PF00453">
    <property type="entry name" value="Ribosomal_L20"/>
    <property type="match status" value="1"/>
</dbReference>
<dbReference type="PRINTS" id="PR00062">
    <property type="entry name" value="RIBOSOMALL20"/>
</dbReference>
<dbReference type="SUPFAM" id="SSF74731">
    <property type="entry name" value="Ribosomal protein L20"/>
    <property type="match status" value="1"/>
</dbReference>
<dbReference type="PROSITE" id="PS00937">
    <property type="entry name" value="RIBOSOMAL_L20"/>
    <property type="match status" value="1"/>
</dbReference>
<comment type="function">
    <text evidence="1">Binds directly to 23S ribosomal RNA and is necessary for the in vitro assembly process of the 50S ribosomal subunit. It is not involved in the protein synthesizing functions of that subunit.</text>
</comment>
<comment type="similarity">
    <text evidence="1">Belongs to the bacterial ribosomal protein bL20 family.</text>
</comment>
<evidence type="ECO:0000255" key="1">
    <source>
        <dbReference type="HAMAP-Rule" id="MF_00382"/>
    </source>
</evidence>
<evidence type="ECO:0000305" key="2"/>
<accession>A7NJ65</accession>
<reference key="1">
    <citation type="submission" date="2007-08" db="EMBL/GenBank/DDBJ databases">
        <title>Complete sequence of Roseiflexus castenholzii DSM 13941.</title>
        <authorList>
            <consortium name="US DOE Joint Genome Institute"/>
            <person name="Copeland A."/>
            <person name="Lucas S."/>
            <person name="Lapidus A."/>
            <person name="Barry K."/>
            <person name="Glavina del Rio T."/>
            <person name="Dalin E."/>
            <person name="Tice H."/>
            <person name="Pitluck S."/>
            <person name="Thompson L.S."/>
            <person name="Brettin T."/>
            <person name="Bruce D."/>
            <person name="Detter J.C."/>
            <person name="Han C."/>
            <person name="Tapia R."/>
            <person name="Schmutz J."/>
            <person name="Larimer F."/>
            <person name="Land M."/>
            <person name="Hauser L."/>
            <person name="Kyrpides N."/>
            <person name="Mikhailova N."/>
            <person name="Bryant D.A."/>
            <person name="Hanada S."/>
            <person name="Tsukatani Y."/>
            <person name="Richardson P."/>
        </authorList>
    </citation>
    <scope>NUCLEOTIDE SEQUENCE [LARGE SCALE GENOMIC DNA]</scope>
    <source>
        <strain>DSM 13941 / HLO8</strain>
    </source>
</reference>
<name>RL20_ROSCS</name>